<feature type="chain" id="PRO_0000114485" description="Microtubule nucleation factor SSNA1">
    <location>
        <begin position="1"/>
        <end position="111"/>
    </location>
</feature>
<feature type="coiled-coil region" evidence="2">
    <location>
        <begin position="6"/>
        <end position="71"/>
    </location>
</feature>
<feature type="mutagenesis site" description="Drastic reduction in microtubule branching. Abolishes microtubule branching; when associated with 105-A--A-107." evidence="4">
    <original>ED</original>
    <variation>AA</variation>
    <location>
        <begin position="20"/>
        <end position="21"/>
    </location>
</feature>
<feature type="mutagenesis site" description="Abolishes microtubule branching; when associated with 105-E--E-107." evidence="4">
    <original>ED</original>
    <variation>KK</variation>
    <location>
        <begin position="20"/>
        <end position="21"/>
    </location>
</feature>
<feature type="mutagenesis site" description="Drastic reduction in microtubule branching." evidence="4">
    <original>E</original>
    <variation>A</variation>
    <location>
        <position position="20"/>
    </location>
</feature>
<feature type="mutagenesis site" description="Abolishes fibril formation and microtubule branching. Abolishes microtubule branching; when associated with 20-A-A-21." evidence="4">
    <original>KKK</original>
    <variation>AAA</variation>
    <location>
        <begin position="105"/>
        <end position="107"/>
    </location>
</feature>
<feature type="mutagenesis site" description="Abolishes microtubule branching; when associated with 20-K-K-21." evidence="4">
    <original>KKK</original>
    <variation>EEE</variation>
    <location>
        <begin position="105"/>
        <end position="107"/>
    </location>
</feature>
<keyword id="KW-0131">Cell cycle</keyword>
<keyword id="KW-0132">Cell division</keyword>
<keyword id="KW-0966">Cell projection</keyword>
<keyword id="KW-0969">Cilium</keyword>
<keyword id="KW-0175">Coiled coil</keyword>
<keyword id="KW-0963">Cytoplasm</keyword>
<keyword id="KW-0206">Cytoskeleton</keyword>
<keyword id="KW-0282">Flagellum</keyword>
<comment type="function">
    <text evidence="1 3 4">Microtubule-binding protein which stabilizes dynamic microtubules by slowing growth and shrinkage at both plus and minus ends and serves as a sensor of microtubule damage (By similarity). Induces microtubule branching which is mediated by the formation of long SSNA1 fibrils which guide microtubule protofilaments to split apart from the mother microtubule and form daughter microtubules (PubMed:30250060). Required for cell division (PubMed:12640030).</text>
</comment>
<comment type="subunit">
    <text evidence="4">Self-assembles into fibrils in a head-to-tail fashion.</text>
</comment>
<comment type="subcellular location">
    <subcellularLocation>
        <location evidence="3">Cytoplasm</location>
        <location evidence="3">Cytoskeleton</location>
        <location evidence="3">Flagellum basal body</location>
    </subcellularLocation>
    <subcellularLocation>
        <location evidence="3">Cytoplasm</location>
        <location evidence="3">Cytoskeleton</location>
        <location evidence="3">Flagellum axoneme</location>
    </subcellularLocation>
</comment>
<comment type="developmental stage">
    <text evidence="3">During cell division, levels are elevated between hours 0 at the onset of division and 4 at mid-divison. After 5 hours, when division is close to completion, levels decrease and stay low until hour 7.</text>
</comment>
<comment type="disruption phenotype">
    <text evidence="3">RNAi-mediated knockdown results in multinucleate, multiflagellate cells.</text>
</comment>
<comment type="similarity">
    <text evidence="7">Belongs to the SSNA1 family.</text>
</comment>
<reference key="1">
    <citation type="journal article" date="2003" name="J. Cell Sci.">
        <title>Chlamydomonas DIP13 and human NA14: a new class of proteins associated with microtubule structures is involved in cell division.</title>
        <authorList>
            <person name="Pfannenschmid F."/>
            <person name="Wimmer V.C."/>
            <person name="Rios R.M."/>
            <person name="Geimer S."/>
            <person name="Kroeckel U."/>
            <person name="Leiherer A."/>
            <person name="Haller K."/>
            <person name="Nemcova Y."/>
            <person name="Mages W."/>
        </authorList>
    </citation>
    <scope>NUCLEOTIDE SEQUENCE [GENOMIC DNA]</scope>
    <scope>FUNCTION</scope>
    <scope>SUBCELLULAR LOCATION</scope>
    <scope>DEVELOPMENTAL STAGE</scope>
    <scope>DISRUPTION PHENOTYPE</scope>
    <source>
        <strain>CC125+</strain>
    </source>
</reference>
<reference key="2">
    <citation type="journal article" date="2018" name="Nat. Cell Biol.">
        <title>Direct induction of microtubule branching by microtubule nucleation factor SSNA1.</title>
        <authorList>
            <person name="Basnet N."/>
            <person name="Nedozralova H."/>
            <person name="Crevenna A.H."/>
            <person name="Bodakuntla S."/>
            <person name="Schlichthaerle T."/>
            <person name="Taschner M."/>
            <person name="Cardone G."/>
            <person name="Janke C."/>
            <person name="Jungmann R."/>
            <person name="Magiera M.M."/>
            <person name="Biertuempfel C."/>
            <person name="Mizuno N."/>
        </authorList>
    </citation>
    <scope>FUNCTION</scope>
    <scope>SUBUNIT</scope>
    <scope>MUTAGENESIS OF 20-GLU-ASP-21; GLU-20 AND 105-LYS--LYS-107</scope>
</reference>
<protein>
    <recommendedName>
        <fullName evidence="6">Microtubule nucleation factor SSNA1</fullName>
        <shortName evidence="6">CrSSNA1</shortName>
    </recommendedName>
    <alternativeName>
        <fullName evidence="5">13 kDa deflagellation-inducible protein</fullName>
    </alternativeName>
</protein>
<sequence>MSAQGQALQNHNNELVKCIEDLREKREEIIKQLREDDAEKAKITQELQILTKRLAQVNESIARKTETKNEYDKVISETEAAYLKILESSQTLLTVLKREAVNIAKKKQASS</sequence>
<name>SSNA1_CHLRE</name>
<accession>Q9XF62</accession>
<gene>
    <name evidence="6" type="primary">SSNA1</name>
    <name evidence="5" type="synonym">DIP13</name>
</gene>
<organism>
    <name type="scientific">Chlamydomonas reinhardtii</name>
    <name type="common">Chlamydomonas smithii</name>
    <dbReference type="NCBI Taxonomy" id="3055"/>
    <lineage>
        <taxon>Eukaryota</taxon>
        <taxon>Viridiplantae</taxon>
        <taxon>Chlorophyta</taxon>
        <taxon>core chlorophytes</taxon>
        <taxon>Chlorophyceae</taxon>
        <taxon>CS clade</taxon>
        <taxon>Chlamydomonadales</taxon>
        <taxon>Chlamydomonadaceae</taxon>
        <taxon>Chlamydomonas</taxon>
    </lineage>
</organism>
<proteinExistence type="evidence at protein level"/>
<evidence type="ECO:0000250" key="1">
    <source>
        <dbReference type="UniProtKB" id="O43805"/>
    </source>
</evidence>
<evidence type="ECO:0000255" key="2"/>
<evidence type="ECO:0000269" key="3">
    <source>
    </source>
</evidence>
<evidence type="ECO:0000269" key="4">
    <source>
    </source>
</evidence>
<evidence type="ECO:0000303" key="5">
    <source>
    </source>
</evidence>
<evidence type="ECO:0000303" key="6">
    <source>
    </source>
</evidence>
<evidence type="ECO:0000305" key="7"/>
<dbReference type="EMBL" id="AF131736">
    <property type="protein sequence ID" value="AAD27849.1"/>
    <property type="molecule type" value="Genomic_DNA"/>
</dbReference>
<dbReference type="RefSeq" id="XP_001697145.1">
    <property type="nucleotide sequence ID" value="XM_001697093.1"/>
</dbReference>
<dbReference type="SMR" id="Q9XF62"/>
<dbReference type="PaxDb" id="3055-EDP00400"/>
<dbReference type="ProMEX" id="Q9XF62"/>
<dbReference type="EnsemblPlants" id="PNW70549">
    <property type="protein sequence ID" value="PNW70549"/>
    <property type="gene ID" value="CHLRE_17g724550v5"/>
</dbReference>
<dbReference type="Gramene" id="PNW70549">
    <property type="protein sequence ID" value="PNW70549"/>
    <property type="gene ID" value="CHLRE_17g724550v5"/>
</dbReference>
<dbReference type="KEGG" id="cre:CHLRE_17g724550v5"/>
<dbReference type="eggNOG" id="ENOG502S16M">
    <property type="taxonomic scope" value="Eukaryota"/>
</dbReference>
<dbReference type="HOGENOM" id="CLU_153440_0_0_1"/>
<dbReference type="OMA" id="ETKNEYD"/>
<dbReference type="OrthoDB" id="295355at2759"/>
<dbReference type="GO" id="GO:0005930">
    <property type="term" value="C:axoneme"/>
    <property type="evidence" value="ECO:0000314"/>
    <property type="project" value="UniProtKB"/>
</dbReference>
<dbReference type="GO" id="GO:0036064">
    <property type="term" value="C:ciliary basal body"/>
    <property type="evidence" value="ECO:0000314"/>
    <property type="project" value="UniProtKB"/>
</dbReference>
<dbReference type="GO" id="GO:0005881">
    <property type="term" value="C:cytoplasmic microtubule"/>
    <property type="evidence" value="ECO:0000314"/>
    <property type="project" value="UniProtKB"/>
</dbReference>
<dbReference type="GO" id="GO:0031514">
    <property type="term" value="C:motile cilium"/>
    <property type="evidence" value="ECO:0007669"/>
    <property type="project" value="UniProtKB-KW"/>
</dbReference>
<dbReference type="GO" id="GO:0051301">
    <property type="term" value="P:cell division"/>
    <property type="evidence" value="ECO:0000315"/>
    <property type="project" value="UniProtKB"/>
</dbReference>
<dbReference type="GO" id="GO:0000226">
    <property type="term" value="P:microtubule cytoskeleton organization"/>
    <property type="evidence" value="ECO:0000314"/>
    <property type="project" value="UniProtKB"/>
</dbReference>
<dbReference type="InterPro" id="IPR033362">
    <property type="entry name" value="SSNA1_fam"/>
</dbReference>
<dbReference type="PANTHER" id="PTHR28661:SF1">
    <property type="entry name" value="MICROTUBULE NUCLEATION FACTOR SSNA1"/>
    <property type="match status" value="1"/>
</dbReference>
<dbReference type="PANTHER" id="PTHR28661">
    <property type="entry name" value="SJOEGREN SYNDROME NUCLEAR AUTOANTIGEN 1"/>
    <property type="match status" value="1"/>
</dbReference>